<feature type="chain" id="PRO_1000010221" description="Ribosomal RNA small subunit methyltransferase G">
    <location>
        <begin position="1"/>
        <end position="237"/>
    </location>
</feature>
<feature type="binding site" evidence="1">
    <location>
        <position position="78"/>
    </location>
    <ligand>
        <name>S-adenosyl-L-methionine</name>
        <dbReference type="ChEBI" id="CHEBI:59789"/>
    </ligand>
</feature>
<feature type="binding site" evidence="1">
    <location>
        <position position="83"/>
    </location>
    <ligand>
        <name>S-adenosyl-L-methionine</name>
        <dbReference type="ChEBI" id="CHEBI:59789"/>
    </ligand>
</feature>
<feature type="binding site" evidence="1">
    <location>
        <begin position="129"/>
        <end position="130"/>
    </location>
    <ligand>
        <name>S-adenosyl-L-methionine</name>
        <dbReference type="ChEBI" id="CHEBI:59789"/>
    </ligand>
</feature>
<feature type="binding site" evidence="1">
    <location>
        <position position="148"/>
    </location>
    <ligand>
        <name>S-adenosyl-L-methionine</name>
        <dbReference type="ChEBI" id="CHEBI:59789"/>
    </ligand>
</feature>
<evidence type="ECO:0000255" key="1">
    <source>
        <dbReference type="HAMAP-Rule" id="MF_00074"/>
    </source>
</evidence>
<organism>
    <name type="scientific">Streptococcus pyogenes serotype M12 (strain MGAS9429)</name>
    <dbReference type="NCBI Taxonomy" id="370551"/>
    <lineage>
        <taxon>Bacteria</taxon>
        <taxon>Bacillati</taxon>
        <taxon>Bacillota</taxon>
        <taxon>Bacilli</taxon>
        <taxon>Lactobacillales</taxon>
        <taxon>Streptococcaceae</taxon>
        <taxon>Streptococcus</taxon>
    </lineage>
</organism>
<proteinExistence type="inferred from homology"/>
<dbReference type="EC" id="2.1.1.-" evidence="1"/>
<dbReference type="EMBL" id="CP000259">
    <property type="protein sequence ID" value="ABF31465.1"/>
    <property type="molecule type" value="Genomic_DNA"/>
</dbReference>
<dbReference type="RefSeq" id="WP_011527471.1">
    <property type="nucleotide sequence ID" value="NC_008021.1"/>
</dbReference>
<dbReference type="SMR" id="Q1JND4"/>
<dbReference type="KEGG" id="spk:MGAS9429_Spy0277"/>
<dbReference type="HOGENOM" id="CLU_065341_0_2_9"/>
<dbReference type="Proteomes" id="UP000002433">
    <property type="component" value="Chromosome"/>
</dbReference>
<dbReference type="GO" id="GO:0005829">
    <property type="term" value="C:cytosol"/>
    <property type="evidence" value="ECO:0007669"/>
    <property type="project" value="TreeGrafter"/>
</dbReference>
<dbReference type="GO" id="GO:0070043">
    <property type="term" value="F:rRNA (guanine-N7-)-methyltransferase activity"/>
    <property type="evidence" value="ECO:0007669"/>
    <property type="project" value="UniProtKB-UniRule"/>
</dbReference>
<dbReference type="CDD" id="cd02440">
    <property type="entry name" value="AdoMet_MTases"/>
    <property type="match status" value="1"/>
</dbReference>
<dbReference type="FunFam" id="3.40.50.150:FF:000041">
    <property type="entry name" value="Ribosomal RNA small subunit methyltransferase G"/>
    <property type="match status" value="1"/>
</dbReference>
<dbReference type="Gene3D" id="3.40.50.150">
    <property type="entry name" value="Vaccinia Virus protein VP39"/>
    <property type="match status" value="1"/>
</dbReference>
<dbReference type="HAMAP" id="MF_00074">
    <property type="entry name" value="16SrRNA_methyltr_G"/>
    <property type="match status" value="1"/>
</dbReference>
<dbReference type="InterPro" id="IPR003682">
    <property type="entry name" value="rRNA_ssu_MeTfrase_G"/>
</dbReference>
<dbReference type="InterPro" id="IPR029063">
    <property type="entry name" value="SAM-dependent_MTases_sf"/>
</dbReference>
<dbReference type="NCBIfam" id="TIGR00138">
    <property type="entry name" value="rsmG_gidB"/>
    <property type="match status" value="1"/>
</dbReference>
<dbReference type="PANTHER" id="PTHR31760">
    <property type="entry name" value="S-ADENOSYL-L-METHIONINE-DEPENDENT METHYLTRANSFERASES SUPERFAMILY PROTEIN"/>
    <property type="match status" value="1"/>
</dbReference>
<dbReference type="PANTHER" id="PTHR31760:SF0">
    <property type="entry name" value="S-ADENOSYL-L-METHIONINE-DEPENDENT METHYLTRANSFERASES SUPERFAMILY PROTEIN"/>
    <property type="match status" value="1"/>
</dbReference>
<dbReference type="Pfam" id="PF02527">
    <property type="entry name" value="GidB"/>
    <property type="match status" value="1"/>
</dbReference>
<dbReference type="PIRSF" id="PIRSF003078">
    <property type="entry name" value="GidB"/>
    <property type="match status" value="1"/>
</dbReference>
<dbReference type="SUPFAM" id="SSF53335">
    <property type="entry name" value="S-adenosyl-L-methionine-dependent methyltransferases"/>
    <property type="match status" value="1"/>
</dbReference>
<gene>
    <name evidence="1" type="primary">rsmG</name>
    <name type="ordered locus">MGAS9429_Spy0277</name>
</gene>
<protein>
    <recommendedName>
        <fullName evidence="1">Ribosomal RNA small subunit methyltransferase G</fullName>
        <ecNumber evidence="1">2.1.1.-</ecNumber>
    </recommendedName>
    <alternativeName>
        <fullName evidence="1">16S rRNA 7-methylguanosine methyltransferase</fullName>
        <shortName evidence="1">16S rRNA m7G methyltransferase</shortName>
    </alternativeName>
</protein>
<reference key="1">
    <citation type="journal article" date="2006" name="Proc. Natl. Acad. Sci. U.S.A.">
        <title>Molecular genetic anatomy of inter- and intraserotype variation in the human bacterial pathogen group A Streptococcus.</title>
        <authorList>
            <person name="Beres S.B."/>
            <person name="Richter E.W."/>
            <person name="Nagiec M.J."/>
            <person name="Sumby P."/>
            <person name="Porcella S.F."/>
            <person name="DeLeo F.R."/>
            <person name="Musser J.M."/>
        </authorList>
    </citation>
    <scope>NUCLEOTIDE SEQUENCE [LARGE SCALE GENOMIC DNA]</scope>
    <source>
        <strain>MGAS9429</strain>
    </source>
</reference>
<accession>Q1JND4</accession>
<name>RSMG_STRPC</name>
<sequence length="237" mass="26804">MTPQDFYRTLEEDGFSLSSKQKEQFDTYFKLLVEWNTKINLTAITEENEVYPQHFYDSIAPILQAFLANEPIKLLDIGAGAGFPSLPMKILFPNLEVTIIDSLNKRISFLTLLAQELGLENVHFFHGRAEDFGQDKAFRGQFDVVTARAVARMQVLSELTIPFLKIGGKLIALKAQAADQELEEAKNALCLLFGKVIKNHSYQLPNGDSRFITIVEKKKETPNKYPRKAGLPNKKPL</sequence>
<comment type="function">
    <text evidence="1">Specifically methylates the N7 position of a guanine in 16S rRNA.</text>
</comment>
<comment type="subcellular location">
    <subcellularLocation>
        <location evidence="1">Cytoplasm</location>
    </subcellularLocation>
</comment>
<comment type="similarity">
    <text evidence="1">Belongs to the methyltransferase superfamily. RNA methyltransferase RsmG family.</text>
</comment>
<keyword id="KW-0963">Cytoplasm</keyword>
<keyword id="KW-0489">Methyltransferase</keyword>
<keyword id="KW-0698">rRNA processing</keyword>
<keyword id="KW-0949">S-adenosyl-L-methionine</keyword>
<keyword id="KW-0808">Transferase</keyword>